<accession>A3QDA2</accession>
<evidence type="ECO:0000255" key="1">
    <source>
        <dbReference type="HAMAP-Rule" id="MF_01579"/>
    </source>
</evidence>
<dbReference type="EC" id="2.1.1.178" evidence="1"/>
<dbReference type="EMBL" id="CP000606">
    <property type="protein sequence ID" value="ABO23450.1"/>
    <property type="molecule type" value="Genomic_DNA"/>
</dbReference>
<dbReference type="RefSeq" id="WP_011865382.1">
    <property type="nucleotide sequence ID" value="NC_009092.1"/>
</dbReference>
<dbReference type="SMR" id="A3QDA2"/>
<dbReference type="STRING" id="323850.Shew_1583"/>
<dbReference type="KEGG" id="slo:Shew_1583"/>
<dbReference type="eggNOG" id="COG0144">
    <property type="taxonomic scope" value="Bacteria"/>
</dbReference>
<dbReference type="eggNOG" id="COG3270">
    <property type="taxonomic scope" value="Bacteria"/>
</dbReference>
<dbReference type="HOGENOM" id="CLU_005316_6_2_6"/>
<dbReference type="OrthoDB" id="9810297at2"/>
<dbReference type="Proteomes" id="UP000001558">
    <property type="component" value="Chromosome"/>
</dbReference>
<dbReference type="GO" id="GO:0005737">
    <property type="term" value="C:cytoplasm"/>
    <property type="evidence" value="ECO:0007669"/>
    <property type="project" value="UniProtKB-SubCell"/>
</dbReference>
<dbReference type="GO" id="GO:0003723">
    <property type="term" value="F:RNA binding"/>
    <property type="evidence" value="ECO:0007669"/>
    <property type="project" value="UniProtKB-KW"/>
</dbReference>
<dbReference type="GO" id="GO:0009383">
    <property type="term" value="F:rRNA (cytosine-C5-)-methyltransferase activity"/>
    <property type="evidence" value="ECO:0007669"/>
    <property type="project" value="TreeGrafter"/>
</dbReference>
<dbReference type="GO" id="GO:0070475">
    <property type="term" value="P:rRNA base methylation"/>
    <property type="evidence" value="ECO:0007669"/>
    <property type="project" value="TreeGrafter"/>
</dbReference>
<dbReference type="CDD" id="cd02440">
    <property type="entry name" value="AdoMet_MTases"/>
    <property type="match status" value="1"/>
</dbReference>
<dbReference type="Gene3D" id="3.10.450.720">
    <property type="match status" value="1"/>
</dbReference>
<dbReference type="Gene3D" id="3.40.50.150">
    <property type="entry name" value="Vaccinia Virus protein VP39"/>
    <property type="match status" value="1"/>
</dbReference>
<dbReference type="HAMAP" id="MF_01579">
    <property type="entry name" value="16SrRNA_methyltr_F"/>
    <property type="match status" value="1"/>
</dbReference>
<dbReference type="InterPro" id="IPR031341">
    <property type="entry name" value="Methyltr_RsmF_N"/>
</dbReference>
<dbReference type="InterPro" id="IPR049560">
    <property type="entry name" value="MeTrfase_RsmB-F_NOP2_cat"/>
</dbReference>
<dbReference type="InterPro" id="IPR001678">
    <property type="entry name" value="MeTrfase_RsmB-F_NOP2_dom"/>
</dbReference>
<dbReference type="InterPro" id="IPR027391">
    <property type="entry name" value="Nol1_Nop2_Fmu_2"/>
</dbReference>
<dbReference type="InterPro" id="IPR011023">
    <property type="entry name" value="Nop2p"/>
</dbReference>
<dbReference type="InterPro" id="IPR023267">
    <property type="entry name" value="RCMT"/>
</dbReference>
<dbReference type="InterPro" id="IPR023545">
    <property type="entry name" value="rRNA_ssu_MeTfrase_F"/>
</dbReference>
<dbReference type="InterPro" id="IPR029063">
    <property type="entry name" value="SAM-dependent_MTases_sf"/>
</dbReference>
<dbReference type="InterPro" id="IPR048457">
    <property type="entry name" value="YebU_pre-PUA_dom"/>
</dbReference>
<dbReference type="NCBIfam" id="TIGR00446">
    <property type="entry name" value="nop2p"/>
    <property type="match status" value="1"/>
</dbReference>
<dbReference type="NCBIfam" id="NF008898">
    <property type="entry name" value="PRK11933.1"/>
    <property type="match status" value="1"/>
</dbReference>
<dbReference type="PANTHER" id="PTHR22807:SF30">
    <property type="entry name" value="28S RRNA (CYTOSINE(4447)-C(5))-METHYLTRANSFERASE-RELATED"/>
    <property type="match status" value="1"/>
</dbReference>
<dbReference type="PANTHER" id="PTHR22807">
    <property type="entry name" value="NOP2 YEAST -RELATED NOL1/NOP2/FMU SUN DOMAIN-CONTAINING"/>
    <property type="match status" value="1"/>
</dbReference>
<dbReference type="Pfam" id="PF01189">
    <property type="entry name" value="Methyltr_RsmB-F"/>
    <property type="match status" value="1"/>
</dbReference>
<dbReference type="Pfam" id="PF17125">
    <property type="entry name" value="Methyltr_RsmF_N"/>
    <property type="match status" value="1"/>
</dbReference>
<dbReference type="Pfam" id="PF13636">
    <property type="entry name" value="Methyltranf_PUA"/>
    <property type="match status" value="1"/>
</dbReference>
<dbReference type="Pfam" id="PF21150">
    <property type="entry name" value="YebU_pre-PUA_dom"/>
    <property type="match status" value="1"/>
</dbReference>
<dbReference type="PRINTS" id="PR02008">
    <property type="entry name" value="RCMTFAMILY"/>
</dbReference>
<dbReference type="SUPFAM" id="SSF53335">
    <property type="entry name" value="S-adenosyl-L-methionine-dependent methyltransferases"/>
    <property type="match status" value="1"/>
</dbReference>
<dbReference type="PROSITE" id="PS51686">
    <property type="entry name" value="SAM_MT_RSMB_NOP"/>
    <property type="match status" value="1"/>
</dbReference>
<protein>
    <recommendedName>
        <fullName evidence="1">Ribosomal RNA small subunit methyltransferase F</fullName>
        <ecNumber evidence="1">2.1.1.178</ecNumber>
    </recommendedName>
    <alternativeName>
        <fullName evidence="1">16S rRNA m5C1407 methyltransferase</fullName>
    </alternativeName>
    <alternativeName>
        <fullName evidence="1">rRNA (cytosine-C(5)-)-methyltransferase RsmF</fullName>
    </alternativeName>
</protein>
<organism>
    <name type="scientific">Shewanella loihica (strain ATCC BAA-1088 / PV-4)</name>
    <dbReference type="NCBI Taxonomy" id="323850"/>
    <lineage>
        <taxon>Bacteria</taxon>
        <taxon>Pseudomonadati</taxon>
        <taxon>Pseudomonadota</taxon>
        <taxon>Gammaproteobacteria</taxon>
        <taxon>Alteromonadales</taxon>
        <taxon>Shewanellaceae</taxon>
        <taxon>Shewanella</taxon>
    </lineage>
</organism>
<reference key="1">
    <citation type="submission" date="2007-03" db="EMBL/GenBank/DDBJ databases">
        <title>Complete sequence of Shewanella loihica PV-4.</title>
        <authorList>
            <consortium name="US DOE Joint Genome Institute"/>
            <person name="Copeland A."/>
            <person name="Lucas S."/>
            <person name="Lapidus A."/>
            <person name="Barry K."/>
            <person name="Detter J.C."/>
            <person name="Glavina del Rio T."/>
            <person name="Hammon N."/>
            <person name="Israni S."/>
            <person name="Dalin E."/>
            <person name="Tice H."/>
            <person name="Pitluck S."/>
            <person name="Chain P."/>
            <person name="Malfatti S."/>
            <person name="Shin M."/>
            <person name="Vergez L."/>
            <person name="Schmutz J."/>
            <person name="Larimer F."/>
            <person name="Land M."/>
            <person name="Hauser L."/>
            <person name="Kyrpides N."/>
            <person name="Mikhailova N."/>
            <person name="Romine M.F."/>
            <person name="Serres G."/>
            <person name="Fredrickson J."/>
            <person name="Tiedje J."/>
            <person name="Richardson P."/>
        </authorList>
    </citation>
    <scope>NUCLEOTIDE SEQUENCE [LARGE SCALE GENOMIC DNA]</scope>
    <source>
        <strain>ATCC BAA-1088 / PV-4</strain>
    </source>
</reference>
<feature type="chain" id="PRO_1000069273" description="Ribosomal RNA small subunit methyltransferase F">
    <location>
        <begin position="1"/>
        <end position="486"/>
    </location>
</feature>
<feature type="active site" description="Nucleophile" evidence="1">
    <location>
        <position position="244"/>
    </location>
</feature>
<feature type="binding site" evidence="1">
    <location>
        <begin position="122"/>
        <end position="128"/>
    </location>
    <ligand>
        <name>S-adenosyl-L-methionine</name>
        <dbReference type="ChEBI" id="CHEBI:59789"/>
    </ligand>
</feature>
<feature type="binding site" evidence="1">
    <location>
        <position position="146"/>
    </location>
    <ligand>
        <name>S-adenosyl-L-methionine</name>
        <dbReference type="ChEBI" id="CHEBI:59789"/>
    </ligand>
</feature>
<feature type="binding site" evidence="1">
    <location>
        <position position="173"/>
    </location>
    <ligand>
        <name>S-adenosyl-L-methionine</name>
        <dbReference type="ChEBI" id="CHEBI:59789"/>
    </ligand>
</feature>
<feature type="binding site" evidence="1">
    <location>
        <position position="191"/>
    </location>
    <ligand>
        <name>S-adenosyl-L-methionine</name>
        <dbReference type="ChEBI" id="CHEBI:59789"/>
    </ligand>
</feature>
<keyword id="KW-0963">Cytoplasm</keyword>
<keyword id="KW-0489">Methyltransferase</keyword>
<keyword id="KW-1185">Reference proteome</keyword>
<keyword id="KW-0694">RNA-binding</keyword>
<keyword id="KW-0698">rRNA processing</keyword>
<keyword id="KW-0949">S-adenosyl-L-methionine</keyword>
<keyword id="KW-0808">Transferase</keyword>
<name>RSMF_SHELP</name>
<proteinExistence type="inferred from homology"/>
<sequence>MVQLNQNFINSIAKDMPDHLSMDEFISYCAKPLRPSIRVNTLKITTADFITMMNAKGWQFEPVPWCEDGFWVKVDDSVQLGNTVEHIQGLFYIQEASSMLPPKALFPEPIEDATSLTLLDMASAPGSKTTQLAAMMNNQGLLVANEYSSSRVKVLHANVQRMGASNLALTHFDARVFGKYLFESFDAILLDAPCGGEGTVRKDPDALKHWDESEIEAIASVQRDLIESAFLALKPGGSLVYSTCTLNRRENQDVCLHLKATYGDAVQFESLAGLFPGAEKASTSEGFLHVWPQIFDSEGFFIAKLTKIAAVPRNSEEPRKQKNFPFTPIDKKSRQALCDYFDTSFGIKLDGQGILMQRDDEFWLFPTNVDPLIGKIRFQRIGLKLADALKKGFKPRHEAVMALADRLRGIPLDEAQAIQYLMGRDIALTSKEKPQGERLVSYQGAHLGLVKHLGNKLKNSLPRDLVRDKICSSSAMAVDQQATGED</sequence>
<comment type="function">
    <text evidence="1">Specifically methylates the cytosine at position 1407 (m5C1407) of 16S rRNA.</text>
</comment>
<comment type="catalytic activity">
    <reaction evidence="1">
        <text>cytidine(1407) in 16S rRNA + S-adenosyl-L-methionine = 5-methylcytidine(1407) in 16S rRNA + S-adenosyl-L-homocysteine + H(+)</text>
        <dbReference type="Rhea" id="RHEA:42756"/>
        <dbReference type="Rhea" id="RHEA-COMP:10223"/>
        <dbReference type="Rhea" id="RHEA-COMP:10224"/>
        <dbReference type="ChEBI" id="CHEBI:15378"/>
        <dbReference type="ChEBI" id="CHEBI:57856"/>
        <dbReference type="ChEBI" id="CHEBI:59789"/>
        <dbReference type="ChEBI" id="CHEBI:74483"/>
        <dbReference type="ChEBI" id="CHEBI:82748"/>
        <dbReference type="EC" id="2.1.1.178"/>
    </reaction>
</comment>
<comment type="subcellular location">
    <subcellularLocation>
        <location evidence="1">Cytoplasm</location>
    </subcellularLocation>
</comment>
<comment type="similarity">
    <text evidence="1">Belongs to the class I-like SAM-binding methyltransferase superfamily. RsmB/NOP family.</text>
</comment>
<gene>
    <name evidence="1" type="primary">rsmF</name>
    <name type="ordered locus">Shew_1583</name>
</gene>